<organism>
    <name type="scientific">Enterobacter cloacae subsp. cloacae (strain ATCC 13047 / DSM 30054 / NBRC 13535 / NCTC 10005 / WDCM 00083 / NCDC 279-56)</name>
    <dbReference type="NCBI Taxonomy" id="716541"/>
    <lineage>
        <taxon>Bacteria</taxon>
        <taxon>Pseudomonadati</taxon>
        <taxon>Pseudomonadota</taxon>
        <taxon>Gammaproteobacteria</taxon>
        <taxon>Enterobacterales</taxon>
        <taxon>Enterobacteriaceae</taxon>
        <taxon>Enterobacter</taxon>
        <taxon>Enterobacter cloacae complex</taxon>
    </lineage>
</organism>
<reference key="1">
    <citation type="journal article" date="2010" name="J. Bacteriol.">
        <title>Complete genome sequence of Enterobacter cloacae subsp. cloacae type strain ATCC 13047.</title>
        <authorList>
            <person name="Ren Y."/>
            <person name="Ren Y."/>
            <person name="Zhou Z."/>
            <person name="Guo X."/>
            <person name="Li Y."/>
            <person name="Feng L."/>
            <person name="Wang L."/>
        </authorList>
    </citation>
    <scope>NUCLEOTIDE SEQUENCE [LARGE SCALE GENOMIC DNA]</scope>
    <source>
        <strain>ATCC 13047 / DSM 30054 / NBRC 13535 / NCTC 10005 / WDCM 00083 / NCDC 279-56</strain>
    </source>
</reference>
<proteinExistence type="inferred from homology"/>
<sequence length="164" mass="17578">MTTPDKQTFRDAMACVGAAVNIITTDGPAGRAGFTASAVCSVTDSPPTLLVCLNRGASVWPTFSENRTLCVNTLSAGQEPLSNLFGGKTPMEDRFAAARWQTGETGCPRLEEALASFDCRISQVVSVGTHDILFCDIVSIIRHPAPQGLVWFDRGYHALMRPAC</sequence>
<gene>
    <name evidence="1" type="primary">rutF</name>
    <name type="ordered locus">ECL_02627</name>
</gene>
<name>RUTF_ENTCC</name>
<comment type="function">
    <text evidence="1">Catalyzes the reduction of FMN to FMNH2 which is used to reduce pyrimidine by RutA via the Rut pathway.</text>
</comment>
<comment type="catalytic activity">
    <reaction evidence="1">
        <text>FMNH2 + NAD(+) = FMN + NADH + 2 H(+)</text>
        <dbReference type="Rhea" id="RHEA:21620"/>
        <dbReference type="ChEBI" id="CHEBI:15378"/>
        <dbReference type="ChEBI" id="CHEBI:57540"/>
        <dbReference type="ChEBI" id="CHEBI:57618"/>
        <dbReference type="ChEBI" id="CHEBI:57945"/>
        <dbReference type="ChEBI" id="CHEBI:58210"/>
        <dbReference type="EC" id="1.5.1.42"/>
    </reaction>
</comment>
<comment type="similarity">
    <text evidence="1">Belongs to the non-flavoprotein flavin reductase family. RutF subfamily.</text>
</comment>
<evidence type="ECO:0000255" key="1">
    <source>
        <dbReference type="HAMAP-Rule" id="MF_00833"/>
    </source>
</evidence>
<keyword id="KW-0285">Flavoprotein</keyword>
<keyword id="KW-0288">FMN</keyword>
<keyword id="KW-0520">NAD</keyword>
<keyword id="KW-0560">Oxidoreductase</keyword>
<keyword id="KW-1185">Reference proteome</keyword>
<dbReference type="EC" id="1.5.1.42" evidence="1"/>
<dbReference type="EMBL" id="CP001918">
    <property type="protein sequence ID" value="ADF62170.1"/>
    <property type="molecule type" value="Genomic_DNA"/>
</dbReference>
<dbReference type="RefSeq" id="WP_013097198.1">
    <property type="nucleotide sequence ID" value="NC_014121.1"/>
</dbReference>
<dbReference type="RefSeq" id="YP_003613119.1">
    <property type="nucleotide sequence ID" value="NC_014121.1"/>
</dbReference>
<dbReference type="SMR" id="D5CE37"/>
<dbReference type="STRING" id="716541.ECL_02627"/>
<dbReference type="EnsemblBacteria" id="ADF62170">
    <property type="protein sequence ID" value="ADF62170"/>
    <property type="gene ID" value="ECL_02627"/>
</dbReference>
<dbReference type="GeneID" id="83572965"/>
<dbReference type="KEGG" id="enc:ECL_02627"/>
<dbReference type="PATRIC" id="fig|716541.4.peg.2800"/>
<dbReference type="eggNOG" id="COG1853">
    <property type="taxonomic scope" value="Bacteria"/>
</dbReference>
<dbReference type="HOGENOM" id="CLU_059021_2_2_6"/>
<dbReference type="OrthoDB" id="6401628at2"/>
<dbReference type="Proteomes" id="UP000002363">
    <property type="component" value="Chromosome"/>
</dbReference>
<dbReference type="GO" id="GO:0010181">
    <property type="term" value="F:FMN binding"/>
    <property type="evidence" value="ECO:0007669"/>
    <property type="project" value="InterPro"/>
</dbReference>
<dbReference type="GO" id="GO:0052874">
    <property type="term" value="F:FMN reductase (NADH) activity"/>
    <property type="evidence" value="ECO:0007669"/>
    <property type="project" value="UniProtKB-EC"/>
</dbReference>
<dbReference type="GO" id="GO:0008752">
    <property type="term" value="F:FMN reductase [NAD(P)H] activity"/>
    <property type="evidence" value="ECO:0007669"/>
    <property type="project" value="InterPro"/>
</dbReference>
<dbReference type="GO" id="GO:0042602">
    <property type="term" value="F:riboflavin reductase (NADPH) activity"/>
    <property type="evidence" value="ECO:0007669"/>
    <property type="project" value="UniProtKB-UniRule"/>
</dbReference>
<dbReference type="GO" id="GO:0019740">
    <property type="term" value="P:nitrogen utilization"/>
    <property type="evidence" value="ECO:0007669"/>
    <property type="project" value="UniProtKB-UniRule"/>
</dbReference>
<dbReference type="GO" id="GO:0006212">
    <property type="term" value="P:uracil catabolic process"/>
    <property type="evidence" value="ECO:0007669"/>
    <property type="project" value="UniProtKB-UniRule"/>
</dbReference>
<dbReference type="FunFam" id="2.30.110.10:FF:000002">
    <property type="entry name" value="FMN reductase (NADH) RutF"/>
    <property type="match status" value="1"/>
</dbReference>
<dbReference type="Gene3D" id="2.30.110.10">
    <property type="entry name" value="Electron Transport, Fmn-binding Protein, Chain A"/>
    <property type="match status" value="1"/>
</dbReference>
<dbReference type="HAMAP" id="MF_00833">
    <property type="entry name" value="RutF"/>
    <property type="match status" value="1"/>
</dbReference>
<dbReference type="InterPro" id="IPR002563">
    <property type="entry name" value="Flavin_Rdtase-like_dom"/>
</dbReference>
<dbReference type="InterPro" id="IPR050268">
    <property type="entry name" value="NADH-dep_flavin_reductase"/>
</dbReference>
<dbReference type="InterPro" id="IPR019917">
    <property type="entry name" value="RutF"/>
</dbReference>
<dbReference type="InterPro" id="IPR012349">
    <property type="entry name" value="Split_barrel_FMN-bd"/>
</dbReference>
<dbReference type="NCBIfam" id="TIGR03615">
    <property type="entry name" value="RutF"/>
    <property type="match status" value="1"/>
</dbReference>
<dbReference type="PANTHER" id="PTHR30466">
    <property type="entry name" value="FLAVIN REDUCTASE"/>
    <property type="match status" value="1"/>
</dbReference>
<dbReference type="PANTHER" id="PTHR30466:SF1">
    <property type="entry name" value="FMN REDUCTASE (NADH) RUTF"/>
    <property type="match status" value="1"/>
</dbReference>
<dbReference type="Pfam" id="PF01613">
    <property type="entry name" value="Flavin_Reduct"/>
    <property type="match status" value="1"/>
</dbReference>
<dbReference type="SMART" id="SM00903">
    <property type="entry name" value="Flavin_Reduct"/>
    <property type="match status" value="1"/>
</dbReference>
<dbReference type="SUPFAM" id="SSF50475">
    <property type="entry name" value="FMN-binding split barrel"/>
    <property type="match status" value="1"/>
</dbReference>
<accession>D5CE37</accession>
<protein>
    <recommendedName>
        <fullName evidence="1">FMN reductase (NADH) RutF</fullName>
        <ecNumber evidence="1">1.5.1.42</ecNumber>
    </recommendedName>
    <alternativeName>
        <fullName evidence="1">FMN reductase</fullName>
    </alternativeName>
    <alternativeName>
        <fullName evidence="1">NADH-flavin reductase RutF</fullName>
    </alternativeName>
    <alternativeName>
        <fullName evidence="1">NADH:flavin oxidoreductase</fullName>
    </alternativeName>
</protein>
<feature type="chain" id="PRO_0000402994" description="FMN reductase (NADH) RutF">
    <location>
        <begin position="1"/>
        <end position="164"/>
    </location>
</feature>